<gene>
    <name evidence="1" type="primary">ICL1</name>
    <name type="ORF">OOU_Y34scaffold00745g63</name>
</gene>
<sequence length="547" mass="61028">MASKNMVNPAVEPSMEDDLFAREVAEVKQWWSDPRWRYTKRPFTAEQIVSKRGNLKIEYPSNAQSKKLWKILEGRFQKRDASYTYGCLEPTMVTQMAKYLDTVYVSGWQSSSTASSSDEPGPDLADYPYTTVPNKVSHLFMAQLFHDRKQRHERLSAPKSERSKLQNIDYLRPIIADADTGHGGLTAVMKLTKLFIEKGAAGIHIEDQAPGTKKCGHMAGKVLVPINEHINRLVAIRAQADIMGVDLLAIARTDAEAATLITTSIDPRDHAFILGCTNPSLQPLADLMNTAEQSGKTGDQLQAIEDEWMAKANLKRFDDAVVDVINSSSSIRNPKDVAAKYLQAAKGKSNREARAIASSLGVPEIFFDWDSPRTREGYFRIKGGCDCAINRAIAYAPYADAIWMESKLPDYEQAKEFAEGVHAVYPEQKLAYNLSPSFNWKTAMPRDEQETYIRRLAGLGYCWQFITLAGLHTTALISDRFARAYSEVGMRAYGELVQEPEMELGVDVVKHQKWSGATYVDELQKMVTGGVSSTAAMGKGVTEDQFH</sequence>
<feature type="chain" id="PRO_0000423539" description="Isocitrate lyase">
    <location>
        <begin position="1"/>
        <end position="547"/>
    </location>
</feature>
<feature type="active site" description="Proton acceptor" evidence="3">
    <location>
        <position position="215"/>
    </location>
</feature>
<feature type="binding site" evidence="3">
    <location>
        <begin position="106"/>
        <end position="108"/>
    </location>
    <ligand>
        <name>substrate</name>
    </ligand>
</feature>
<feature type="binding site" evidence="3">
    <location>
        <position position="177"/>
    </location>
    <ligand>
        <name>Mg(2+)</name>
        <dbReference type="ChEBI" id="CHEBI:18420"/>
    </ligand>
</feature>
<feature type="binding site" evidence="3">
    <location>
        <begin position="216"/>
        <end position="217"/>
    </location>
    <ligand>
        <name>substrate</name>
    </ligand>
</feature>
<feature type="binding site" evidence="3">
    <location>
        <position position="252"/>
    </location>
    <ligand>
        <name>substrate</name>
    </ligand>
</feature>
<feature type="binding site" evidence="3">
    <location>
        <begin position="433"/>
        <end position="437"/>
    </location>
    <ligand>
        <name>substrate</name>
    </ligand>
</feature>
<feature type="binding site" evidence="3">
    <location>
        <position position="467"/>
    </location>
    <ligand>
        <name>substrate</name>
    </ligand>
</feature>
<feature type="sequence conflict" description="In Ref. 1; AAX07638." evidence="4" ref="1">
    <original>N</original>
    <variation>S</variation>
    <location>
        <position position="227"/>
    </location>
</feature>
<feature type="sequence conflict" description="In Ref. 1; AAX07638." evidence="4" ref="1">
    <original>Q</original>
    <variation>L</variation>
    <location>
        <position position="428"/>
    </location>
</feature>
<proteinExistence type="evidence at transcript level"/>
<organism>
    <name type="scientific">Pyricularia oryzae (strain Y34)</name>
    <name type="common">Rice blast fungus</name>
    <name type="synonym">Magnaporthe oryzae</name>
    <dbReference type="NCBI Taxonomy" id="1143189"/>
    <lineage>
        <taxon>Eukaryota</taxon>
        <taxon>Fungi</taxon>
        <taxon>Dikarya</taxon>
        <taxon>Ascomycota</taxon>
        <taxon>Pezizomycotina</taxon>
        <taxon>Sordariomycetes</taxon>
        <taxon>Sordariomycetidae</taxon>
        <taxon>Magnaporthales</taxon>
        <taxon>Pyriculariaceae</taxon>
        <taxon>Pyricularia</taxon>
    </lineage>
</organism>
<keyword id="KW-0329">Glyoxylate bypass</keyword>
<keyword id="KW-0330">Glyoxysome</keyword>
<keyword id="KW-0456">Lyase</keyword>
<keyword id="KW-0460">Magnesium</keyword>
<keyword id="KW-0479">Metal-binding</keyword>
<keyword id="KW-0576">Peroxisome</keyword>
<keyword id="KW-0816">Tricarboxylic acid cycle</keyword>
<protein>
    <recommendedName>
        <fullName evidence="1">Isocitrate lyase</fullName>
        <shortName evidence="4">ICL</shortName>
        <shortName evidence="4">Isocitrase</shortName>
        <shortName evidence="4">Isocitratase</shortName>
        <ecNumber evidence="1">4.1.3.1</ecNumber>
    </recommendedName>
    <alternativeName>
        <fullName evidence="1">Methylisocitrate lyase</fullName>
        <shortName evidence="4">MICA</shortName>
        <ecNumber evidence="1">4.1.3.30</ecNumber>
    </alternativeName>
    <alternativeName>
        <fullName evidence="4">Threo-D(S)-isocitrate glyoxylate-lyase</fullName>
    </alternativeName>
</protein>
<dbReference type="EC" id="4.1.3.1" evidence="1"/>
<dbReference type="EC" id="4.1.3.30" evidence="1"/>
<dbReference type="EMBL" id="AY849617">
    <property type="protein sequence ID" value="AAX07638.1"/>
    <property type="molecule type" value="mRNA"/>
</dbReference>
<dbReference type="EMBL" id="JH793093">
    <property type="protein sequence ID" value="ELQ34788.1"/>
    <property type="molecule type" value="Genomic_DNA"/>
</dbReference>
<dbReference type="SMR" id="L7HUY5"/>
<dbReference type="OrthoDB" id="631617at147550"/>
<dbReference type="UniPathway" id="UPA00703">
    <property type="reaction ID" value="UER00719"/>
</dbReference>
<dbReference type="Proteomes" id="UP000011086">
    <property type="component" value="Unassembled WGS sequence"/>
</dbReference>
<dbReference type="GO" id="GO:0009514">
    <property type="term" value="C:glyoxysome"/>
    <property type="evidence" value="ECO:0007669"/>
    <property type="project" value="UniProtKB-SubCell"/>
</dbReference>
<dbReference type="GO" id="GO:0004451">
    <property type="term" value="F:isocitrate lyase activity"/>
    <property type="evidence" value="ECO:0007669"/>
    <property type="project" value="UniProtKB-EC"/>
</dbReference>
<dbReference type="GO" id="GO:0046872">
    <property type="term" value="F:metal ion binding"/>
    <property type="evidence" value="ECO:0007669"/>
    <property type="project" value="UniProtKB-KW"/>
</dbReference>
<dbReference type="GO" id="GO:0046421">
    <property type="term" value="F:methylisocitrate lyase activity"/>
    <property type="evidence" value="ECO:0007669"/>
    <property type="project" value="UniProtKB-EC"/>
</dbReference>
<dbReference type="GO" id="GO:0006097">
    <property type="term" value="P:glyoxylate cycle"/>
    <property type="evidence" value="ECO:0007669"/>
    <property type="project" value="UniProtKB-UniPathway"/>
</dbReference>
<dbReference type="GO" id="GO:0006099">
    <property type="term" value="P:tricarboxylic acid cycle"/>
    <property type="evidence" value="ECO:0007669"/>
    <property type="project" value="UniProtKB-KW"/>
</dbReference>
<dbReference type="FunFam" id="1.10.10.850:FF:000001">
    <property type="entry name" value="Isocitrate lyase"/>
    <property type="match status" value="1"/>
</dbReference>
<dbReference type="Gene3D" id="1.10.10.850">
    <property type="match status" value="1"/>
</dbReference>
<dbReference type="Gene3D" id="3.20.20.60">
    <property type="entry name" value="Phosphoenolpyruvate-binding domains"/>
    <property type="match status" value="1"/>
</dbReference>
<dbReference type="InterPro" id="IPR006254">
    <property type="entry name" value="Isocitrate_lyase"/>
</dbReference>
<dbReference type="InterPro" id="IPR018523">
    <property type="entry name" value="Isocitrate_lyase_ph_CS"/>
</dbReference>
<dbReference type="InterPro" id="IPR015813">
    <property type="entry name" value="Pyrv/PenolPyrv_kinase-like_dom"/>
</dbReference>
<dbReference type="InterPro" id="IPR040442">
    <property type="entry name" value="Pyrv_kinase-like_dom_sf"/>
</dbReference>
<dbReference type="NCBIfam" id="TIGR01346">
    <property type="entry name" value="isocit_lyase"/>
    <property type="match status" value="1"/>
</dbReference>
<dbReference type="PANTHER" id="PTHR21631:SF3">
    <property type="entry name" value="BIFUNCTIONAL GLYOXYLATE CYCLE PROTEIN"/>
    <property type="match status" value="1"/>
</dbReference>
<dbReference type="PANTHER" id="PTHR21631">
    <property type="entry name" value="ISOCITRATE LYASE/MALATE SYNTHASE"/>
    <property type="match status" value="1"/>
</dbReference>
<dbReference type="Pfam" id="PF00463">
    <property type="entry name" value="ICL"/>
    <property type="match status" value="1"/>
</dbReference>
<dbReference type="PIRSF" id="PIRSF001362">
    <property type="entry name" value="Isocit_lyase"/>
    <property type="match status" value="1"/>
</dbReference>
<dbReference type="SUPFAM" id="SSF51621">
    <property type="entry name" value="Phosphoenolpyruvate/pyruvate domain"/>
    <property type="match status" value="1"/>
</dbReference>
<dbReference type="PROSITE" id="PS00161">
    <property type="entry name" value="ISOCITRATE_LYASE"/>
    <property type="match status" value="1"/>
</dbReference>
<reference key="1">
    <citation type="submission" date="2004-12" db="EMBL/GenBank/DDBJ databases">
        <authorList>
            <person name="Dong H.T."/>
            <person name="Peng Y.L."/>
            <person name="Chen B.S."/>
            <person name="Li Y.Z."/>
            <person name="Li D.B."/>
        </authorList>
    </citation>
    <scope>NUCLEOTIDE SEQUENCE [MRNA]</scope>
    <source>
        <strain>Y34</strain>
    </source>
</reference>
<reference key="2">
    <citation type="journal article" date="2012" name="PLoS Genet.">
        <title>Comparative analysis of the genomes of two field isolates of the rice blast fungus Magnaporthe oryzae.</title>
        <authorList>
            <person name="Xue M."/>
            <person name="Yang J."/>
            <person name="Li Z."/>
            <person name="Hu S."/>
            <person name="Yao N."/>
            <person name="Dean R.A."/>
            <person name="Zhao W."/>
            <person name="Shen M."/>
            <person name="Zhang H."/>
            <person name="Li C."/>
            <person name="Liu L."/>
            <person name="Cao L."/>
            <person name="Xu X."/>
            <person name="Xing Y."/>
            <person name="Hsiang T."/>
            <person name="Zhang Z."/>
            <person name="Xu J.-R."/>
            <person name="Peng Y.-L."/>
        </authorList>
    </citation>
    <scope>NUCLEOTIDE SEQUENCE [LARGE SCALE GENOMIC DNA]</scope>
    <source>
        <strain>Y34</strain>
    </source>
</reference>
<evidence type="ECO:0000250" key="1">
    <source>
        <dbReference type="UniProtKB" id="P28240"/>
    </source>
</evidence>
<evidence type="ECO:0000250" key="2">
    <source>
        <dbReference type="UniProtKB" id="P28299"/>
    </source>
</evidence>
<evidence type="ECO:0000250" key="3">
    <source>
        <dbReference type="UniProtKB" id="P9WKK7"/>
    </source>
</evidence>
<evidence type="ECO:0000305" key="4"/>
<comment type="function">
    <text evidence="1">Catalyzes the formation of succinate and glyoxylate from isocitrate, a key step of the glyoxylate cycle, which operates as an anaplerotic route for replenishing the tricarboxylic acid cycle. Required for growth on ethanol or acetate, but dispensable when fermentable carbon sources are available. Also acts on 2-methylisocitrate.</text>
</comment>
<comment type="catalytic activity">
    <reaction evidence="1">
        <text>D-threo-isocitrate = glyoxylate + succinate</text>
        <dbReference type="Rhea" id="RHEA:13245"/>
        <dbReference type="ChEBI" id="CHEBI:15562"/>
        <dbReference type="ChEBI" id="CHEBI:30031"/>
        <dbReference type="ChEBI" id="CHEBI:36655"/>
        <dbReference type="EC" id="4.1.3.1"/>
    </reaction>
</comment>
<comment type="catalytic activity">
    <reaction evidence="1">
        <text>(2S,3R)-3-hydroxybutane-1,2,3-tricarboxylate = pyruvate + succinate</text>
        <dbReference type="Rhea" id="RHEA:16809"/>
        <dbReference type="ChEBI" id="CHEBI:15361"/>
        <dbReference type="ChEBI" id="CHEBI:30031"/>
        <dbReference type="ChEBI" id="CHEBI:57429"/>
        <dbReference type="EC" id="4.1.3.30"/>
    </reaction>
</comment>
<comment type="cofactor">
    <cofactor evidence="3">
        <name>Mg(2+)</name>
        <dbReference type="ChEBI" id="CHEBI:18420"/>
    </cofactor>
</comment>
<comment type="pathway">
    <text>Carbohydrate metabolism; glyoxylate cycle; (S)-malate from isocitrate: step 1/2.</text>
</comment>
<comment type="subunit">
    <text evidence="1">Homotetramer.</text>
</comment>
<comment type="subcellular location">
    <subcellularLocation>
        <location evidence="2">Glyoxysome</location>
    </subcellularLocation>
</comment>
<comment type="similarity">
    <text evidence="4">Belongs to the isocitrate lyase/PEP mutase superfamily. Isocitrate lyase family.</text>
</comment>
<accession>L7HUY5</accession>
<accession>A4QU17</accession>
<accession>G4N2R9</accession>
<accession>Q5EN15</accession>
<accession>Q8J232</accession>
<name>ACEA_PYRO3</name>